<reference key="1">
    <citation type="journal article" date="2008" name="J. Biotechnol.">
        <title>Ultrafast pyrosequencing of Corynebacterium kroppenstedtii DSM44385 revealed insights into the physiology of a lipophilic corynebacterium that lacks mycolic acids.</title>
        <authorList>
            <person name="Tauch A."/>
            <person name="Schneider J."/>
            <person name="Szczepanowski R."/>
            <person name="Tilker A."/>
            <person name="Viehoever P."/>
            <person name="Gartemann K.-H."/>
            <person name="Arnold W."/>
            <person name="Blom J."/>
            <person name="Brinkrolf K."/>
            <person name="Brune I."/>
            <person name="Goetker S."/>
            <person name="Weisshaar B."/>
            <person name="Goesmann A."/>
            <person name="Droege M."/>
            <person name="Puehler A."/>
        </authorList>
    </citation>
    <scope>NUCLEOTIDE SEQUENCE [LARGE SCALE GENOMIC DNA]</scope>
    <source>
        <strain>DSM 44385 / JCM 11950 / CIP 105744 / CCUG 35717</strain>
    </source>
</reference>
<evidence type="ECO:0000255" key="1">
    <source>
        <dbReference type="HAMAP-Rule" id="MF_00514"/>
    </source>
</evidence>
<evidence type="ECO:0000256" key="2">
    <source>
        <dbReference type="SAM" id="MobiDB-lite"/>
    </source>
</evidence>
<evidence type="ECO:0000305" key="3"/>
<accession>C4LID0</accession>
<dbReference type="EMBL" id="CP001620">
    <property type="protein sequence ID" value="ACR17585.1"/>
    <property type="molecule type" value="Genomic_DNA"/>
</dbReference>
<dbReference type="RefSeq" id="WP_012731472.1">
    <property type="nucleotide sequence ID" value="NC_012704.1"/>
</dbReference>
<dbReference type="SMR" id="C4LID0"/>
<dbReference type="STRING" id="645127.ckrop_0831"/>
<dbReference type="KEGG" id="ckp:ckrop_0831"/>
<dbReference type="eggNOG" id="COG0291">
    <property type="taxonomic scope" value="Bacteria"/>
</dbReference>
<dbReference type="HOGENOM" id="CLU_169643_4_2_11"/>
<dbReference type="OrthoDB" id="9804851at2"/>
<dbReference type="Proteomes" id="UP000001473">
    <property type="component" value="Chromosome"/>
</dbReference>
<dbReference type="GO" id="GO:0022625">
    <property type="term" value="C:cytosolic large ribosomal subunit"/>
    <property type="evidence" value="ECO:0007669"/>
    <property type="project" value="TreeGrafter"/>
</dbReference>
<dbReference type="GO" id="GO:0003735">
    <property type="term" value="F:structural constituent of ribosome"/>
    <property type="evidence" value="ECO:0007669"/>
    <property type="project" value="InterPro"/>
</dbReference>
<dbReference type="GO" id="GO:0006412">
    <property type="term" value="P:translation"/>
    <property type="evidence" value="ECO:0007669"/>
    <property type="project" value="UniProtKB-UniRule"/>
</dbReference>
<dbReference type="FunFam" id="4.10.410.60:FF:000001">
    <property type="entry name" value="50S ribosomal protein L35"/>
    <property type="match status" value="1"/>
</dbReference>
<dbReference type="Gene3D" id="4.10.410.60">
    <property type="match status" value="1"/>
</dbReference>
<dbReference type="HAMAP" id="MF_00514">
    <property type="entry name" value="Ribosomal_bL35"/>
    <property type="match status" value="1"/>
</dbReference>
<dbReference type="InterPro" id="IPR001706">
    <property type="entry name" value="Ribosomal_bL35"/>
</dbReference>
<dbReference type="InterPro" id="IPR021137">
    <property type="entry name" value="Ribosomal_bL35-like"/>
</dbReference>
<dbReference type="InterPro" id="IPR018265">
    <property type="entry name" value="Ribosomal_bL35_CS"/>
</dbReference>
<dbReference type="InterPro" id="IPR037229">
    <property type="entry name" value="Ribosomal_bL35_sf"/>
</dbReference>
<dbReference type="NCBIfam" id="TIGR00001">
    <property type="entry name" value="rpmI_bact"/>
    <property type="match status" value="1"/>
</dbReference>
<dbReference type="PANTHER" id="PTHR33343">
    <property type="entry name" value="54S RIBOSOMAL PROTEIN BL35M"/>
    <property type="match status" value="1"/>
</dbReference>
<dbReference type="PANTHER" id="PTHR33343:SF1">
    <property type="entry name" value="LARGE RIBOSOMAL SUBUNIT PROTEIN BL35M"/>
    <property type="match status" value="1"/>
</dbReference>
<dbReference type="Pfam" id="PF01632">
    <property type="entry name" value="Ribosomal_L35p"/>
    <property type="match status" value="1"/>
</dbReference>
<dbReference type="PRINTS" id="PR00064">
    <property type="entry name" value="RIBOSOMALL35"/>
</dbReference>
<dbReference type="SUPFAM" id="SSF143034">
    <property type="entry name" value="L35p-like"/>
    <property type="match status" value="1"/>
</dbReference>
<dbReference type="PROSITE" id="PS00936">
    <property type="entry name" value="RIBOSOMAL_L35"/>
    <property type="match status" value="1"/>
</dbReference>
<sequence>MKQKTHSGIKKRIKKTGSGKLRREQANRRHLLEGKPSTRTRRLKGDTSVSRNDTKRVNRLLGEG</sequence>
<feature type="chain" id="PRO_1000211695" description="Large ribosomal subunit protein bL35">
    <location>
        <begin position="1"/>
        <end position="64"/>
    </location>
</feature>
<feature type="region of interest" description="Disordered" evidence="2">
    <location>
        <begin position="1"/>
        <end position="64"/>
    </location>
</feature>
<feature type="compositionally biased region" description="Basic residues" evidence="2">
    <location>
        <begin position="1"/>
        <end position="17"/>
    </location>
</feature>
<feature type="compositionally biased region" description="Basic and acidic residues" evidence="2">
    <location>
        <begin position="21"/>
        <end position="33"/>
    </location>
</feature>
<proteinExistence type="inferred from homology"/>
<organism>
    <name type="scientific">Corynebacterium kroppenstedtii (strain DSM 44385 / JCM 11950 / CIP 105744 / CCUG 35717)</name>
    <dbReference type="NCBI Taxonomy" id="645127"/>
    <lineage>
        <taxon>Bacteria</taxon>
        <taxon>Bacillati</taxon>
        <taxon>Actinomycetota</taxon>
        <taxon>Actinomycetes</taxon>
        <taxon>Mycobacteriales</taxon>
        <taxon>Corynebacteriaceae</taxon>
        <taxon>Corynebacterium</taxon>
    </lineage>
</organism>
<gene>
    <name evidence="1" type="primary">rpmI</name>
    <name type="ordered locus">ckrop_0831</name>
</gene>
<protein>
    <recommendedName>
        <fullName evidence="1">Large ribosomal subunit protein bL35</fullName>
    </recommendedName>
    <alternativeName>
        <fullName evidence="3">50S ribosomal protein L35</fullName>
    </alternativeName>
</protein>
<name>RL35_CORK4</name>
<keyword id="KW-1185">Reference proteome</keyword>
<keyword id="KW-0687">Ribonucleoprotein</keyword>
<keyword id="KW-0689">Ribosomal protein</keyword>
<comment type="similarity">
    <text evidence="1">Belongs to the bacterial ribosomal protein bL35 family.</text>
</comment>